<proteinExistence type="predicted"/>
<dbReference type="EMBL" id="AP009048">
    <property type="protein sequence ID" value="BAA16002.2"/>
    <property type="molecule type" value="Genomic_DNA"/>
</dbReference>
<dbReference type="SMR" id="P0CF63"/>
<dbReference type="KEGG" id="ecj:JW5918"/>
<dbReference type="HOGENOM" id="CLU_052819_0_0_6"/>
<dbReference type="PhylomeDB" id="P0CF63"/>
<dbReference type="GO" id="GO:0003677">
    <property type="term" value="F:DNA binding"/>
    <property type="evidence" value="ECO:0007669"/>
    <property type="project" value="UniProtKB-KW"/>
</dbReference>
<dbReference type="GO" id="GO:0015074">
    <property type="term" value="P:DNA integration"/>
    <property type="evidence" value="ECO:0007669"/>
    <property type="project" value="InterPro"/>
</dbReference>
<dbReference type="GO" id="GO:0006310">
    <property type="term" value="P:DNA recombination"/>
    <property type="evidence" value="ECO:0007669"/>
    <property type="project" value="UniProtKB-KW"/>
</dbReference>
<dbReference type="GO" id="GO:0032196">
    <property type="term" value="P:transposition"/>
    <property type="evidence" value="ECO:0007669"/>
    <property type="project" value="UniProtKB-KW"/>
</dbReference>
<dbReference type="Gene3D" id="3.30.420.10">
    <property type="entry name" value="Ribonuclease H-like superfamily/Ribonuclease H"/>
    <property type="match status" value="1"/>
</dbReference>
<dbReference type="InterPro" id="IPR025948">
    <property type="entry name" value="HTH-like_dom"/>
</dbReference>
<dbReference type="InterPro" id="IPR001584">
    <property type="entry name" value="Integrase_cat-core"/>
</dbReference>
<dbReference type="InterPro" id="IPR012337">
    <property type="entry name" value="RNaseH-like_sf"/>
</dbReference>
<dbReference type="InterPro" id="IPR036397">
    <property type="entry name" value="RNaseH_sf"/>
</dbReference>
<dbReference type="InterPro" id="IPR048020">
    <property type="entry name" value="Transpos_IS3"/>
</dbReference>
<dbReference type="NCBIfam" id="NF006918">
    <property type="entry name" value="PRK09409.1"/>
    <property type="match status" value="1"/>
</dbReference>
<dbReference type="NCBIfam" id="NF033516">
    <property type="entry name" value="transpos_IS3"/>
    <property type="match status" value="1"/>
</dbReference>
<dbReference type="PANTHER" id="PTHR37936">
    <property type="entry name" value="TRANSPOSASE INSC FOR INSERTION ELEMENT IS2A-RELATED"/>
    <property type="match status" value="1"/>
</dbReference>
<dbReference type="PANTHER" id="PTHR37936:SF3">
    <property type="entry name" value="TRANSPOSASE INSC FOR INSERTION ELEMENT IS2A-RELATED"/>
    <property type="match status" value="1"/>
</dbReference>
<dbReference type="Pfam" id="PF13276">
    <property type="entry name" value="HTH_21"/>
    <property type="match status" value="1"/>
</dbReference>
<dbReference type="Pfam" id="PF00665">
    <property type="entry name" value="rve"/>
    <property type="match status" value="1"/>
</dbReference>
<dbReference type="SUPFAM" id="SSF53098">
    <property type="entry name" value="Ribonuclease H-like"/>
    <property type="match status" value="1"/>
</dbReference>
<dbReference type="PROSITE" id="PS50994">
    <property type="entry name" value="INTEGRASE"/>
    <property type="match status" value="1"/>
</dbReference>
<accession>P0CF63</accession>
<accession>P0C5W4</accession>
<accession>P19777</accession>
<accession>P76167</accession>
<accession>P76916</accession>
<accession>P77033</accession>
<accession>Q79EJ0</accession>
<keyword id="KW-0233">DNA recombination</keyword>
<keyword id="KW-0238">DNA-binding</keyword>
<keyword id="KW-0814">Transposable element</keyword>
<keyword id="KW-0815">Transposition</keyword>
<organism>
    <name type="scientific">Escherichia coli (strain K12)</name>
    <dbReference type="NCBI Taxonomy" id="83333"/>
    <lineage>
        <taxon>Bacteria</taxon>
        <taxon>Pseudomonadati</taxon>
        <taxon>Pseudomonadota</taxon>
        <taxon>Gammaproteobacteria</taxon>
        <taxon>Enterobacterales</taxon>
        <taxon>Enterobacteriaceae</taxon>
        <taxon>Escherichia</taxon>
    </lineage>
</organism>
<protein>
    <recommendedName>
        <fullName>Transposase InsD for insertion element IS2-11</fullName>
    </recommendedName>
</protein>
<reference key="1">
    <citation type="journal article" date="2006" name="Mol. Syst. Biol.">
        <title>Highly accurate genome sequences of Escherichia coli K-12 strains MG1655 and W3110.</title>
        <authorList>
            <person name="Hayashi K."/>
            <person name="Morooka N."/>
            <person name="Yamamoto Y."/>
            <person name="Fujita K."/>
            <person name="Isono K."/>
            <person name="Choi S."/>
            <person name="Ohtsubo E."/>
            <person name="Baba T."/>
            <person name="Wanner B.L."/>
            <person name="Mori H."/>
            <person name="Horiuchi T."/>
        </authorList>
    </citation>
    <scope>NUCLEOTIDE SEQUENCE [LARGE SCALE GENOMIC DNA]</scope>
    <source>
        <strain>K12 / W3110 / ATCC 27325 / DSM 5911</strain>
    </source>
</reference>
<evidence type="ECO:0000255" key="1">
    <source>
        <dbReference type="PROSITE-ProRule" id="PRU00457"/>
    </source>
</evidence>
<feature type="chain" id="PRO_0000393582" description="Transposase InsD for insertion element IS2-11">
    <location>
        <begin position="1"/>
        <end position="307"/>
    </location>
</feature>
<feature type="domain" description="Integrase catalytic" evidence="1">
    <location>
        <begin position="112"/>
        <end position="295"/>
    </location>
</feature>
<comment type="function">
    <text>Involved in the transposition of the insertion sequence IS2.</text>
</comment>
<sequence>MWTGKKVDSARALIARGWGVSLVSRCLRVSRAQLHVILRRTDDWMDGRRSRHTDDTDVLLRIHHVIGELPTYGYRRVWALLRRQAELDGMPAINAKRVYRIMRQNALLLERKPAVPPSKRAHTGRVAVKESNQRWCSDGFEFCCDNGERLRVTFALDCCDREALHWAVTTGGFNSETVQDVMLGAVERRFGNDLPSSPVEWLTDNGSCYRANETRQFARMLGLEPKNTAVRSPESNGIAESFVKTIKRDYISIMPKPDGLTAAKNLAEAFEHYNEWHPHSALGYRSPREYLRQRACNGLSDNRCLEI</sequence>
<gene>
    <name type="ordered locus">JW5918</name>
</gene>
<name>IND11_ECOLI</name>